<feature type="chain" id="PRO_0000065372" description="Uncharacterized protein F58A4.1">
    <location>
        <begin position="1"/>
        <end position="254"/>
    </location>
</feature>
<feature type="region of interest" description="Disordered" evidence="1">
    <location>
        <begin position="60"/>
        <end position="161"/>
    </location>
</feature>
<feature type="compositionally biased region" description="Low complexity" evidence="1">
    <location>
        <begin position="63"/>
        <end position="77"/>
    </location>
</feature>
<feature type="compositionally biased region" description="Low complexity" evidence="1">
    <location>
        <begin position="89"/>
        <end position="146"/>
    </location>
</feature>
<organism>
    <name type="scientific">Caenorhabditis elegans</name>
    <dbReference type="NCBI Taxonomy" id="6239"/>
    <lineage>
        <taxon>Eukaryota</taxon>
        <taxon>Metazoa</taxon>
        <taxon>Ecdysozoa</taxon>
        <taxon>Nematoda</taxon>
        <taxon>Chromadorea</taxon>
        <taxon>Rhabditida</taxon>
        <taxon>Rhabditina</taxon>
        <taxon>Rhabditomorpha</taxon>
        <taxon>Rhabditoidea</taxon>
        <taxon>Rhabditidae</taxon>
        <taxon>Peloderinae</taxon>
        <taxon>Caenorhabditis</taxon>
    </lineage>
</organism>
<sequence>MIGSVRVLVLLLAFIVTASAIGYSGGGYQPHSCDGDWPEKFPEAPKGFQFRCKCPCKCPPKSPTTTSISTSTVSTTPERLTKPYEETDTPIPTHSSPSTSTSTSTSTSTSTSTSRSTSTVTPTTRSSTTTTATSTPTSSSKATTTSAQITQPEIPQAAPGTVLKGEEFPVKQDGLGDGGVVHGPGTTFWIRSPTPPNIPLLVGGQSRLATVRPDSPYASDAALNPLNGGAGDMEFGIKNVGTPKTPRAVINPDA</sequence>
<protein>
    <recommendedName>
        <fullName>Uncharacterized protein F58A4.1</fullName>
    </recommendedName>
</protein>
<keyword id="KW-1185">Reference proteome</keyword>
<name>YMH1_CAEEL</name>
<dbReference type="EMBL" id="Z22179">
    <property type="protein sequence ID" value="CAA80169.1"/>
    <property type="molecule type" value="Genomic_DNA"/>
</dbReference>
<dbReference type="PIR" id="D88560">
    <property type="entry name" value="D88560"/>
</dbReference>
<dbReference type="RefSeq" id="NP_499123.1">
    <property type="nucleotide sequence ID" value="NM_066722.4"/>
</dbReference>
<dbReference type="FunCoup" id="P34468">
    <property type="interactions" value="191"/>
</dbReference>
<dbReference type="STRING" id="6239.F58A4.1.1"/>
<dbReference type="PaxDb" id="6239-F58A4.1"/>
<dbReference type="EnsemblMetazoa" id="F58A4.1.1">
    <property type="protein sequence ID" value="F58A4.1.1"/>
    <property type="gene ID" value="WBGene00010226"/>
</dbReference>
<dbReference type="GeneID" id="176355"/>
<dbReference type="KEGG" id="cel:CELE_F58A4.1"/>
<dbReference type="UCSC" id="F58A4.1">
    <property type="organism name" value="c. elegans"/>
</dbReference>
<dbReference type="AGR" id="WB:WBGene00010226"/>
<dbReference type="CTD" id="176355"/>
<dbReference type="WormBase" id="F58A4.1">
    <property type="protein sequence ID" value="CE20889"/>
    <property type="gene ID" value="WBGene00010226"/>
</dbReference>
<dbReference type="eggNOG" id="ENOG502TDJY">
    <property type="taxonomic scope" value="Eukaryota"/>
</dbReference>
<dbReference type="GeneTree" id="ENSGT00970000196225"/>
<dbReference type="HOGENOM" id="CLU_090769_0_0_1"/>
<dbReference type="InParanoid" id="P34468"/>
<dbReference type="OMA" id="CKCKPRS"/>
<dbReference type="PRO" id="PR:P34468"/>
<dbReference type="Proteomes" id="UP000001940">
    <property type="component" value="Chromosome III"/>
</dbReference>
<dbReference type="Bgee" id="WBGene00010226">
    <property type="expression patterns" value="Expressed in adult organism and 1 other cell type or tissue"/>
</dbReference>
<proteinExistence type="predicted"/>
<gene>
    <name type="ORF">F58A4.1</name>
</gene>
<accession>P34468</accession>
<evidence type="ECO:0000256" key="1">
    <source>
        <dbReference type="SAM" id="MobiDB-lite"/>
    </source>
</evidence>
<reference key="1">
    <citation type="journal article" date="1994" name="Nature">
        <title>2.2 Mb of contiguous nucleotide sequence from chromosome III of C. elegans.</title>
        <authorList>
            <person name="Wilson R."/>
            <person name="Ainscough R."/>
            <person name="Anderson K."/>
            <person name="Baynes C."/>
            <person name="Berks M."/>
            <person name="Bonfield J."/>
            <person name="Burton J."/>
            <person name="Connell M."/>
            <person name="Copsey T."/>
            <person name="Cooper J."/>
            <person name="Coulson A."/>
            <person name="Craxton M."/>
            <person name="Dear S."/>
            <person name="Du Z."/>
            <person name="Durbin R."/>
            <person name="Favello A."/>
            <person name="Fraser A."/>
            <person name="Fulton L."/>
            <person name="Gardner A."/>
            <person name="Green P."/>
            <person name="Hawkins T."/>
            <person name="Hillier L."/>
            <person name="Jier M."/>
            <person name="Johnston L."/>
            <person name="Jones M."/>
            <person name="Kershaw J."/>
            <person name="Kirsten J."/>
            <person name="Laisster N."/>
            <person name="Latreille P."/>
            <person name="Lightning J."/>
            <person name="Lloyd C."/>
            <person name="Mortimore B."/>
            <person name="O'Callaghan M."/>
            <person name="Parsons J."/>
            <person name="Percy C."/>
            <person name="Rifken L."/>
            <person name="Roopra A."/>
            <person name="Saunders D."/>
            <person name="Shownkeen R."/>
            <person name="Sims M."/>
            <person name="Smaldon N."/>
            <person name="Smith A."/>
            <person name="Smith M."/>
            <person name="Sonnhammer E."/>
            <person name="Staden R."/>
            <person name="Sulston J."/>
            <person name="Thierry-Mieg J."/>
            <person name="Thomas K."/>
            <person name="Vaudin M."/>
            <person name="Vaughan K."/>
            <person name="Waterston R."/>
            <person name="Watson A."/>
            <person name="Weinstock L."/>
            <person name="Wilkinson-Sproat J."/>
            <person name="Wohldman P."/>
        </authorList>
    </citation>
    <scope>NUCLEOTIDE SEQUENCE [LARGE SCALE GENOMIC DNA]</scope>
    <source>
        <strain>Bristol N2</strain>
    </source>
</reference>
<reference key="2">
    <citation type="journal article" date="1998" name="Science">
        <title>Genome sequence of the nematode C. elegans: a platform for investigating biology.</title>
        <authorList>
            <consortium name="The C. elegans sequencing consortium"/>
        </authorList>
    </citation>
    <scope>NUCLEOTIDE SEQUENCE [LARGE SCALE GENOMIC DNA]</scope>
    <source>
        <strain>Bristol N2</strain>
    </source>
</reference>